<feature type="chain" id="PRO_0000275563" description="Cytochrome b6-f complex subunit 8">
    <location>
        <begin position="1"/>
        <end position="29"/>
    </location>
</feature>
<feature type="transmembrane region" description="Helical" evidence="1">
    <location>
        <begin position="3"/>
        <end position="23"/>
    </location>
</feature>
<sequence>MDIVSLAWAALMVVFTFSLSLVVWGRSGL</sequence>
<protein>
    <recommendedName>
        <fullName evidence="1">Cytochrome b6-f complex subunit 8</fullName>
    </recommendedName>
    <alternativeName>
        <fullName evidence="1">Cytochrome b6-f complex subunit PetN</fullName>
    </alternativeName>
    <alternativeName>
        <fullName evidence="1">Cytochrome b6-f complex subunit VIII</fullName>
    </alternativeName>
</protein>
<keyword id="KW-0150">Chloroplast</keyword>
<keyword id="KW-0249">Electron transport</keyword>
<keyword id="KW-0472">Membrane</keyword>
<keyword id="KW-0602">Photosynthesis</keyword>
<keyword id="KW-0934">Plastid</keyword>
<keyword id="KW-0793">Thylakoid</keyword>
<keyword id="KW-0812">Transmembrane</keyword>
<keyword id="KW-1133">Transmembrane helix</keyword>
<keyword id="KW-0813">Transport</keyword>
<accession>Q14FG4</accession>
<proteinExistence type="inferred from homology"/>
<name>PETN_POPAL</name>
<organism>
    <name type="scientific">Populus alba</name>
    <name type="common">White poplar</name>
    <dbReference type="NCBI Taxonomy" id="43335"/>
    <lineage>
        <taxon>Eukaryota</taxon>
        <taxon>Viridiplantae</taxon>
        <taxon>Streptophyta</taxon>
        <taxon>Embryophyta</taxon>
        <taxon>Tracheophyta</taxon>
        <taxon>Spermatophyta</taxon>
        <taxon>Magnoliopsida</taxon>
        <taxon>eudicotyledons</taxon>
        <taxon>Gunneridae</taxon>
        <taxon>Pentapetalae</taxon>
        <taxon>rosids</taxon>
        <taxon>fabids</taxon>
        <taxon>Malpighiales</taxon>
        <taxon>Salicaceae</taxon>
        <taxon>Saliceae</taxon>
        <taxon>Populus</taxon>
    </lineage>
</organism>
<dbReference type="EMBL" id="AP008956">
    <property type="protein sequence ID" value="BAE97198.1"/>
    <property type="molecule type" value="Genomic_DNA"/>
</dbReference>
<dbReference type="RefSeq" id="YP_665551.1">
    <property type="nucleotide sequence ID" value="NC_008235.1"/>
</dbReference>
<dbReference type="SMR" id="Q14FG4"/>
<dbReference type="GeneID" id="4178205"/>
<dbReference type="KEGG" id="palz:4178205"/>
<dbReference type="GO" id="GO:0009535">
    <property type="term" value="C:chloroplast thylakoid membrane"/>
    <property type="evidence" value="ECO:0007669"/>
    <property type="project" value="UniProtKB-SubCell"/>
</dbReference>
<dbReference type="GO" id="GO:0009512">
    <property type="term" value="C:cytochrome b6f complex"/>
    <property type="evidence" value="ECO:0007669"/>
    <property type="project" value="InterPro"/>
</dbReference>
<dbReference type="GO" id="GO:0045158">
    <property type="term" value="F:electron transporter, transferring electrons within cytochrome b6/f complex of photosystem II activity"/>
    <property type="evidence" value="ECO:0007669"/>
    <property type="project" value="InterPro"/>
</dbReference>
<dbReference type="GO" id="GO:0017004">
    <property type="term" value="P:cytochrome complex assembly"/>
    <property type="evidence" value="ECO:0007669"/>
    <property type="project" value="UniProtKB-UniRule"/>
</dbReference>
<dbReference type="GO" id="GO:0015979">
    <property type="term" value="P:photosynthesis"/>
    <property type="evidence" value="ECO:0007669"/>
    <property type="project" value="UniProtKB-KW"/>
</dbReference>
<dbReference type="HAMAP" id="MF_00395">
    <property type="entry name" value="Cytb6_f_PetN"/>
    <property type="match status" value="1"/>
</dbReference>
<dbReference type="InterPro" id="IPR036143">
    <property type="entry name" value="Cytochr_b6-f_cplx_su8_sf"/>
</dbReference>
<dbReference type="InterPro" id="IPR005497">
    <property type="entry name" value="Cytochrome_b6-f_cplx_su8"/>
</dbReference>
<dbReference type="Pfam" id="PF03742">
    <property type="entry name" value="PetN"/>
    <property type="match status" value="1"/>
</dbReference>
<dbReference type="SUPFAM" id="SSF103451">
    <property type="entry name" value="PetN subunit of the cytochrome b6f complex"/>
    <property type="match status" value="1"/>
</dbReference>
<reference key="1">
    <citation type="submission" date="2005-03" db="EMBL/GenBank/DDBJ databases">
        <title>Complete structure of the chloroplast genome of Populus alba.</title>
        <authorList>
            <person name="Okumura S."/>
            <person name="Yamashita A."/>
            <person name="Kanamoto H."/>
            <person name="Hattori M."/>
            <person name="Takase H."/>
            <person name="Tomizawa K."/>
        </authorList>
    </citation>
    <scope>NUCLEOTIDE SEQUENCE [LARGE SCALE GENOMIC DNA]</scope>
</reference>
<geneLocation type="chloroplast"/>
<comment type="function">
    <text evidence="1">Component of the cytochrome b6-f complex, which mediates electron transfer between photosystem II (PSII) and photosystem I (PSI), cyclic electron flow around PSI, and state transitions.</text>
</comment>
<comment type="subunit">
    <text evidence="1">The 4 large subunits of the cytochrome b6-f complex are cytochrome b6, subunit IV (17 kDa polypeptide, PetD), cytochrome f and the Rieske protein, while the 4 small subunits are PetG, PetL, PetM and PetN. The complex functions as a dimer.</text>
</comment>
<comment type="subcellular location">
    <subcellularLocation>
        <location>Plastid</location>
        <location>Chloroplast thylakoid membrane</location>
        <topology>Single-pass membrane protein</topology>
    </subcellularLocation>
</comment>
<comment type="similarity">
    <text evidence="1">Belongs to the PetN family.</text>
</comment>
<gene>
    <name evidence="1" type="primary">petN</name>
</gene>
<evidence type="ECO:0000255" key="1">
    <source>
        <dbReference type="HAMAP-Rule" id="MF_00395"/>
    </source>
</evidence>